<accession>G2HK15</accession>
<accession>Q9U1W4</accession>
<organism evidence="6">
    <name type="scientific">Caenorhabditis elegans</name>
    <dbReference type="NCBI Taxonomy" id="6239"/>
    <lineage>
        <taxon>Eukaryota</taxon>
        <taxon>Metazoa</taxon>
        <taxon>Ecdysozoa</taxon>
        <taxon>Nematoda</taxon>
        <taxon>Chromadorea</taxon>
        <taxon>Rhabditida</taxon>
        <taxon>Rhabditina</taxon>
        <taxon>Rhabditomorpha</taxon>
        <taxon>Rhabditoidea</taxon>
        <taxon>Rhabditidae</taxon>
        <taxon>Peloderinae</taxon>
        <taxon>Caenorhabditis</taxon>
    </lineage>
</organism>
<comment type="function">
    <text evidence="1 3">Sequence-specific DNA-binding protein that interacts with enhancer elements to regulate transcription of selected genes (By similarity). Required for neuroblast and epidermal morphogenesis, perhaps acting in cooperation with transcription factor aptf-4 (PubMed:27176626).</text>
</comment>
<comment type="subunit">
    <text evidence="1">Binds DNA as a dimer.</text>
</comment>
<comment type="interaction">
    <interactant intactId="EBI-2416772">
        <id>G2HK15</id>
    </interactant>
    <interactant intactId="EBI-327600">
        <id>Q19862</id>
        <label>aptf-3</label>
    </interactant>
    <organismsDiffer>false</organismsDiffer>
    <experiments>3</experiments>
</comment>
<comment type="subcellular location">
    <subcellularLocation>
        <location evidence="3">Nucleus</location>
    </subcellularLocation>
    <subcellularLocation>
        <location evidence="3">Cytoplasm</location>
    </subcellularLocation>
    <text evidence="3">Localized to both cytoplasm and nucleus in most cells, but significant nuclear enrichment in neuroblasts and epidermal cells in AB lineage during ventral cleft closure and in epidermal cells in C lineage preceding dorsal intercalation.</text>
</comment>
<comment type="alternative products">
    <event type="alternative splicing"/>
    <isoform>
        <id>G2HK15-1</id>
        <name evidence="8">b</name>
        <sequence type="displayed"/>
    </isoform>
    <isoform>
        <id>G2HK15-2</id>
        <name evidence="7">a</name>
        <sequence type="described" ref="VSP_061131"/>
    </isoform>
</comment>
<comment type="similarity">
    <text evidence="4">Belongs to the AP-2 family.</text>
</comment>
<sequence>MDIQMFTTLNSTVPTEPVVGPVEPTVPTVPATKETGPSSSAECSTQPAVAEQEDNSLLAQLLKGKITSDDAKLQPPRGPFEYAPMLSEEAQFAIKLAGLLNPNPVTEQDPSTFKPPPKMSNNVRKNINLTPVIENAVPSGFELESPKDQAFDVVHGRLSMGQNQTCYFVTVEEMRRRLQSPEKLNSSSIACNLKRPKLKNGGELMRAQLRDHGIKVQLNAKQKAFPNKVIALVEAEAVHLGLDLGTAVRDDYPVQDIIQEVAHEALADEDADLDALMNDKDFTECMSALESVFTSVVPPITGIEPKPSNNMRLNNGMETFSSASHGLGIVSQRVWLPQLTAIGNGVASELRRLTETPTESKPEELKA</sequence>
<name>APTF2_CAEEL</name>
<protein>
    <recommendedName>
        <fullName evidence="4">Transcription factor aptf-2</fullName>
    </recommendedName>
</protein>
<gene>
    <name evidence="8" type="primary">aptf-2</name>
    <name evidence="8" type="ORF">Y62E10A.17</name>
</gene>
<reference evidence="6" key="1">
    <citation type="journal article" date="1998" name="Science">
        <title>Genome sequence of the nematode C. elegans: a platform for investigating biology.</title>
        <authorList>
            <consortium name="The C. elegans sequencing consortium"/>
        </authorList>
    </citation>
    <scope>NUCLEOTIDE SEQUENCE [LARGE SCALE GENOMIC DNA]</scope>
    <source>
        <strain evidence="6">Bristol N2</strain>
    </source>
</reference>
<reference evidence="5" key="2">
    <citation type="journal article" date="2016" name="PLoS Genet.">
        <title>The AP-2 Transcription Factor APTF-2 Is Required for Neuroblast and Epidermal Morphogenesis in Caenorhabditis elegans Embryogenesis.</title>
        <authorList>
            <person name="Budirahardja Y."/>
            <person name="Tan P.Y."/>
            <person name="Doan T."/>
            <person name="Weisdepp P."/>
            <person name="Zaidel-Bar R."/>
        </authorList>
    </citation>
    <scope>FUNCTION</scope>
    <scope>SUBCELLULAR LOCATION</scope>
    <scope>MUTAGENESIS OF GLU-182</scope>
</reference>
<feature type="chain" id="PRO_0000453375" description="Transcription factor aptf-2">
    <location>
        <begin position="1"/>
        <end position="367"/>
    </location>
</feature>
<feature type="region of interest" description="Disordered" evidence="2">
    <location>
        <begin position="29"/>
        <end position="49"/>
    </location>
</feature>
<feature type="region of interest" description="H-S-H (helix-span-helix), dimerization" evidence="1">
    <location>
        <begin position="220"/>
        <end position="354"/>
    </location>
</feature>
<feature type="compositionally biased region" description="Polar residues" evidence="2">
    <location>
        <begin position="36"/>
        <end position="47"/>
    </location>
</feature>
<feature type="splice variant" id="VSP_061131" description="In isoform a." evidence="5">
    <location>
        <begin position="1"/>
        <end position="4"/>
    </location>
</feature>
<feature type="mutagenesis site" description="In qm27; embryonic lethality and morphological defects in larva. Embryos show failure in dorsal epidermal cell intercalation, failure of ventral epidermal cell enclosure, and arrest during elongation. Causes aberrant nuclear localization in neuroblasts. Nuclear expression of zinc-finger protein die-1 is significantly reduced. Embryonic lethality exacerbated by simultaneous RNAi-mediated knockdown of transcription factor aptf-4." evidence="3">
    <original>E</original>
    <variation>K</variation>
    <location>
        <position position="182"/>
    </location>
</feature>
<evidence type="ECO:0000250" key="1">
    <source>
        <dbReference type="UniProtKB" id="P05549"/>
    </source>
</evidence>
<evidence type="ECO:0000256" key="2">
    <source>
        <dbReference type="SAM" id="MobiDB-lite"/>
    </source>
</evidence>
<evidence type="ECO:0000269" key="3">
    <source>
    </source>
</evidence>
<evidence type="ECO:0000303" key="4">
    <source>
    </source>
</evidence>
<evidence type="ECO:0000305" key="5"/>
<evidence type="ECO:0000312" key="6">
    <source>
        <dbReference type="Proteomes" id="UP000001940"/>
    </source>
</evidence>
<evidence type="ECO:0000312" key="7">
    <source>
        <dbReference type="WormBase" id="Y62E10A.17a"/>
    </source>
</evidence>
<evidence type="ECO:0000312" key="8">
    <source>
        <dbReference type="WormBase" id="Y62E10A.17b"/>
    </source>
</evidence>
<dbReference type="EMBL" id="BX284604">
    <property type="protein sequence ID" value="CAB60610.1"/>
    <property type="molecule type" value="Genomic_DNA"/>
</dbReference>
<dbReference type="EMBL" id="BX284604">
    <property type="protein sequence ID" value="CCD31155.1"/>
    <property type="molecule type" value="Genomic_DNA"/>
</dbReference>
<dbReference type="RefSeq" id="NP_001255740.1">
    <molecule id="G2HK15-1"/>
    <property type="nucleotide sequence ID" value="NM_001268811.3"/>
</dbReference>
<dbReference type="RefSeq" id="NP_001255741.1">
    <molecule id="G2HK15-2"/>
    <property type="nucleotide sequence ID" value="NM_001268812.3"/>
</dbReference>
<dbReference type="SMR" id="G2HK15"/>
<dbReference type="FunCoup" id="G2HK15">
    <property type="interactions" value="338"/>
</dbReference>
<dbReference type="IntAct" id="G2HK15">
    <property type="interactions" value="27"/>
</dbReference>
<dbReference type="STRING" id="6239.Y62E10A.17b.1"/>
<dbReference type="PaxDb" id="6239-Y62E10A.17b"/>
<dbReference type="EnsemblMetazoa" id="Y62E10A.17a.1">
    <molecule id="G2HK15-2"/>
    <property type="protein sequence ID" value="Y62E10A.17a.1"/>
    <property type="gene ID" value="WBGene00013383"/>
</dbReference>
<dbReference type="EnsemblMetazoa" id="Y62E10A.17b.1">
    <molecule id="G2HK15-1"/>
    <property type="protein sequence ID" value="Y62E10A.17b.1"/>
    <property type="gene ID" value="WBGene00013383"/>
</dbReference>
<dbReference type="GeneID" id="190458"/>
<dbReference type="KEGG" id="cel:CELE_Y62E10A.17"/>
<dbReference type="UCSC" id="Y62E10A.17">
    <property type="organism name" value="c. elegans"/>
</dbReference>
<dbReference type="AGR" id="WB:WBGene00013383"/>
<dbReference type="CTD" id="190458"/>
<dbReference type="WormBase" id="Y62E10A.17a">
    <molecule id="G2HK15-2"/>
    <property type="protein sequence ID" value="CE25526"/>
    <property type="gene ID" value="WBGene00013383"/>
    <property type="gene designation" value="aptf-2"/>
</dbReference>
<dbReference type="WormBase" id="Y62E10A.17b">
    <molecule id="G2HK15-1"/>
    <property type="protein sequence ID" value="CE46244"/>
    <property type="gene ID" value="WBGene00013383"/>
    <property type="gene designation" value="aptf-2"/>
</dbReference>
<dbReference type="eggNOG" id="KOG3811">
    <property type="taxonomic scope" value="Eukaryota"/>
</dbReference>
<dbReference type="GeneTree" id="ENSGT00950000182848"/>
<dbReference type="HOGENOM" id="CLU_754852_0_0_1"/>
<dbReference type="InParanoid" id="G2HK15"/>
<dbReference type="OMA" id="DICIDEI"/>
<dbReference type="OrthoDB" id="5874024at2759"/>
<dbReference type="PhylomeDB" id="G2HK15"/>
<dbReference type="Reactome" id="R-CEL-3232118">
    <property type="pathway name" value="SUMOylation of transcription factors"/>
</dbReference>
<dbReference type="Reactome" id="R-CEL-8866904">
    <property type="pathway name" value="Negative regulation of activity of TFAP2 (AP-2) family transcription factors"/>
</dbReference>
<dbReference type="Reactome" id="R-CEL-8866907">
    <property type="pathway name" value="Activation of the TFAP2 (AP-2) family of transcription factors"/>
</dbReference>
<dbReference type="Reactome" id="R-CEL-9834899">
    <property type="pathway name" value="Specification of the neural plate border"/>
</dbReference>
<dbReference type="PRO" id="PR:G2HK15"/>
<dbReference type="Proteomes" id="UP000001940">
    <property type="component" value="Chromosome IV"/>
</dbReference>
<dbReference type="Bgee" id="WBGene00013383">
    <property type="expression patterns" value="Expressed in embryo and 4 other cell types or tissues"/>
</dbReference>
<dbReference type="ExpressionAtlas" id="G2HK15">
    <property type="expression patterns" value="baseline and differential"/>
</dbReference>
<dbReference type="GO" id="GO:0005737">
    <property type="term" value="C:cytoplasm"/>
    <property type="evidence" value="ECO:0000314"/>
    <property type="project" value="WormBase"/>
</dbReference>
<dbReference type="GO" id="GO:0005634">
    <property type="term" value="C:nucleus"/>
    <property type="evidence" value="ECO:0000314"/>
    <property type="project" value="WormBase"/>
</dbReference>
<dbReference type="GO" id="GO:0001228">
    <property type="term" value="F:DNA-binding transcription activator activity, RNA polymerase II-specific"/>
    <property type="evidence" value="ECO:0000318"/>
    <property type="project" value="GO_Central"/>
</dbReference>
<dbReference type="GO" id="GO:0000977">
    <property type="term" value="F:RNA polymerase II transcription regulatory region sequence-specific DNA binding"/>
    <property type="evidence" value="ECO:0000318"/>
    <property type="project" value="GO_Central"/>
</dbReference>
<dbReference type="GO" id="GO:0045944">
    <property type="term" value="P:positive regulation of transcription by RNA polymerase II"/>
    <property type="evidence" value="ECO:0000318"/>
    <property type="project" value="GO_Central"/>
</dbReference>
<dbReference type="GO" id="GO:0042127">
    <property type="term" value="P:regulation of cell population proliferation"/>
    <property type="evidence" value="ECO:0000318"/>
    <property type="project" value="GO_Central"/>
</dbReference>
<dbReference type="InterPro" id="IPR004979">
    <property type="entry name" value="TF_AP2"/>
</dbReference>
<dbReference type="InterPro" id="IPR013854">
    <property type="entry name" value="TF_AP2_C"/>
</dbReference>
<dbReference type="PANTHER" id="PTHR10812">
    <property type="entry name" value="TRANSCRIPTION FACTOR AP-2"/>
    <property type="match status" value="1"/>
</dbReference>
<dbReference type="PANTHER" id="PTHR10812:SF15">
    <property type="entry name" value="TRANSCRIPTION FACTOR APTF-2"/>
    <property type="match status" value="1"/>
</dbReference>
<dbReference type="Pfam" id="PF03299">
    <property type="entry name" value="TF_AP-2"/>
    <property type="match status" value="1"/>
</dbReference>
<keyword id="KW-0025">Alternative splicing</keyword>
<keyword id="KW-0963">Cytoplasm</keyword>
<keyword id="KW-0217">Developmental protein</keyword>
<keyword id="KW-0238">DNA-binding</keyword>
<keyword id="KW-0539">Nucleus</keyword>
<keyword id="KW-1185">Reference proteome</keyword>
<keyword id="KW-0804">Transcription</keyword>
<keyword id="KW-0805">Transcription regulation</keyword>
<proteinExistence type="evidence at protein level"/>